<accession>A1USB3</accession>
<name>TIG_BARBK</name>
<comment type="function">
    <text evidence="1">Involved in protein export. Acts as a chaperone by maintaining the newly synthesized protein in an open conformation. Functions as a peptidyl-prolyl cis-trans isomerase.</text>
</comment>
<comment type="catalytic activity">
    <reaction evidence="1">
        <text>[protein]-peptidylproline (omega=180) = [protein]-peptidylproline (omega=0)</text>
        <dbReference type="Rhea" id="RHEA:16237"/>
        <dbReference type="Rhea" id="RHEA-COMP:10747"/>
        <dbReference type="Rhea" id="RHEA-COMP:10748"/>
        <dbReference type="ChEBI" id="CHEBI:83833"/>
        <dbReference type="ChEBI" id="CHEBI:83834"/>
        <dbReference type="EC" id="5.2.1.8"/>
    </reaction>
</comment>
<comment type="subcellular location">
    <subcellularLocation>
        <location>Cytoplasm</location>
    </subcellularLocation>
    <text evidence="1">About half TF is bound to the ribosome near the polypeptide exit tunnel while the other half is free in the cytoplasm.</text>
</comment>
<comment type="domain">
    <text evidence="1">Consists of 3 domains; the N-terminus binds the ribosome, the middle domain has PPIase activity, while the C-terminus has intrinsic chaperone activity on its own.</text>
</comment>
<comment type="similarity">
    <text evidence="1">Belongs to the FKBP-type PPIase family. Tig subfamily.</text>
</comment>
<gene>
    <name evidence="1" type="primary">tig</name>
    <name type="ordered locus">BARBAKC583_0553</name>
</gene>
<reference key="1">
    <citation type="submission" date="2006-12" db="EMBL/GenBank/DDBJ databases">
        <authorList>
            <person name="Hendrix L."/>
            <person name="Mohamoud Y."/>
            <person name="Radune D."/>
            <person name="Shvartsbeyn A."/>
            <person name="Daugherty S."/>
            <person name="Dodson R."/>
            <person name="Durkin A.S."/>
            <person name="Harkins D."/>
            <person name="Huot H."/>
            <person name="Kothari S.P."/>
            <person name="Madupu R."/>
            <person name="Li J."/>
            <person name="Nelson W.C."/>
            <person name="Shrivastava S."/>
            <person name="Giglio M.G."/>
            <person name="Haft D."/>
            <person name="Selengut J."/>
            <person name="Fraser-Ligget C."/>
            <person name="Seshadri R."/>
        </authorList>
    </citation>
    <scope>NUCLEOTIDE SEQUENCE [LARGE SCALE GENOMIC DNA]</scope>
    <source>
        <strain>ATCC 35685 / KC583 / Herrer 020/F12,63</strain>
    </source>
</reference>
<feature type="chain" id="PRO_1000022646" description="Trigger factor">
    <location>
        <begin position="1"/>
        <end position="474"/>
    </location>
</feature>
<feature type="domain" description="PPIase FKBP-type" evidence="1">
    <location>
        <begin position="165"/>
        <end position="250"/>
    </location>
</feature>
<feature type="region of interest" description="Disordered" evidence="2">
    <location>
        <begin position="451"/>
        <end position="474"/>
    </location>
</feature>
<feature type="compositionally biased region" description="Basic and acidic residues" evidence="2">
    <location>
        <begin position="451"/>
        <end position="467"/>
    </location>
</feature>
<evidence type="ECO:0000255" key="1">
    <source>
        <dbReference type="HAMAP-Rule" id="MF_00303"/>
    </source>
</evidence>
<evidence type="ECO:0000256" key="2">
    <source>
        <dbReference type="SAM" id="MobiDB-lite"/>
    </source>
</evidence>
<keyword id="KW-0131">Cell cycle</keyword>
<keyword id="KW-0132">Cell division</keyword>
<keyword id="KW-0143">Chaperone</keyword>
<keyword id="KW-0963">Cytoplasm</keyword>
<keyword id="KW-0413">Isomerase</keyword>
<keyword id="KW-0697">Rotamase</keyword>
<proteinExistence type="inferred from homology"/>
<protein>
    <recommendedName>
        <fullName evidence="1">Trigger factor</fullName>
        <shortName evidence="1">TF</shortName>
        <ecNumber evidence="1">5.2.1.8</ecNumber>
    </recommendedName>
    <alternativeName>
        <fullName evidence="1">PPIase</fullName>
    </alternativeName>
</protein>
<sequence>MQVTETLNEGLKREIQVMVPMKDLEAKLNERLDDTKGKIKLNGFRPGKVPSSYLRKMYGKSFMAEVLNEIINDAPRSILVDRNERSAVQPQIDINEDQKVLDGEADFIFNLKYEVLPEFEIKDFKDIEITREIADVSEQEIDEEVKKILSSTRSYSEGDAPSEEGDRVTIDYLGKIDDVPFDGGTGHDVQLVLGSNQFIPGFEEQLVGVKAGDTKAISVKFPDNYGVAHLAGKDAVFNITVKTVSKPDELKIDDEAAKKLGLESLDRLREVVQGQIENQYGLMTRQKIKRQILDSLDADYNFEIPERLVEIEFNNIWAQVNSDLQKSGRSFEDENTTEEKAREEYHMLAQRRVRLGLVLSEIGMKANIQVSESELQTAIFEQVRQYPGQEKEIMNFFRRTPEAIANLRAPIFEEKVIDYLLTHIKIKDKKVTVEELMKEFDESDAIEKSLVKKKTASDNKKSNEIKKKSTMKKV</sequence>
<dbReference type="EC" id="5.2.1.8" evidence="1"/>
<dbReference type="EMBL" id="CP000524">
    <property type="protein sequence ID" value="ABM45428.1"/>
    <property type="molecule type" value="Genomic_DNA"/>
</dbReference>
<dbReference type="RefSeq" id="WP_005766695.1">
    <property type="nucleotide sequence ID" value="NC_008783.1"/>
</dbReference>
<dbReference type="SMR" id="A1USB3"/>
<dbReference type="STRING" id="360095.BARBAKC583_0553"/>
<dbReference type="GeneID" id="4683982"/>
<dbReference type="KEGG" id="bbk:BARBAKC583_0553"/>
<dbReference type="PATRIC" id="fig|360095.6.peg.538"/>
<dbReference type="eggNOG" id="COG0544">
    <property type="taxonomic scope" value="Bacteria"/>
</dbReference>
<dbReference type="HOGENOM" id="CLU_033058_2_2_5"/>
<dbReference type="OrthoDB" id="9767721at2"/>
<dbReference type="Proteomes" id="UP000000643">
    <property type="component" value="Chromosome"/>
</dbReference>
<dbReference type="GO" id="GO:0005737">
    <property type="term" value="C:cytoplasm"/>
    <property type="evidence" value="ECO:0007669"/>
    <property type="project" value="UniProtKB-SubCell"/>
</dbReference>
<dbReference type="GO" id="GO:0003755">
    <property type="term" value="F:peptidyl-prolyl cis-trans isomerase activity"/>
    <property type="evidence" value="ECO:0007669"/>
    <property type="project" value="UniProtKB-UniRule"/>
</dbReference>
<dbReference type="GO" id="GO:0044183">
    <property type="term" value="F:protein folding chaperone"/>
    <property type="evidence" value="ECO:0007669"/>
    <property type="project" value="TreeGrafter"/>
</dbReference>
<dbReference type="GO" id="GO:0043022">
    <property type="term" value="F:ribosome binding"/>
    <property type="evidence" value="ECO:0007669"/>
    <property type="project" value="TreeGrafter"/>
</dbReference>
<dbReference type="GO" id="GO:0051083">
    <property type="term" value="P:'de novo' cotranslational protein folding"/>
    <property type="evidence" value="ECO:0007669"/>
    <property type="project" value="TreeGrafter"/>
</dbReference>
<dbReference type="GO" id="GO:0051301">
    <property type="term" value="P:cell division"/>
    <property type="evidence" value="ECO:0007669"/>
    <property type="project" value="UniProtKB-KW"/>
</dbReference>
<dbReference type="GO" id="GO:0061077">
    <property type="term" value="P:chaperone-mediated protein folding"/>
    <property type="evidence" value="ECO:0007669"/>
    <property type="project" value="TreeGrafter"/>
</dbReference>
<dbReference type="GO" id="GO:0015031">
    <property type="term" value="P:protein transport"/>
    <property type="evidence" value="ECO:0007669"/>
    <property type="project" value="UniProtKB-UniRule"/>
</dbReference>
<dbReference type="GO" id="GO:0043335">
    <property type="term" value="P:protein unfolding"/>
    <property type="evidence" value="ECO:0007669"/>
    <property type="project" value="TreeGrafter"/>
</dbReference>
<dbReference type="FunFam" id="3.10.50.40:FF:000001">
    <property type="entry name" value="Trigger factor"/>
    <property type="match status" value="1"/>
</dbReference>
<dbReference type="Gene3D" id="3.10.50.40">
    <property type="match status" value="1"/>
</dbReference>
<dbReference type="Gene3D" id="3.30.70.1050">
    <property type="entry name" value="Trigger factor ribosome-binding domain"/>
    <property type="match status" value="1"/>
</dbReference>
<dbReference type="Gene3D" id="1.10.3120.10">
    <property type="entry name" value="Trigger factor, C-terminal domain"/>
    <property type="match status" value="1"/>
</dbReference>
<dbReference type="HAMAP" id="MF_00303">
    <property type="entry name" value="Trigger_factor_Tig"/>
    <property type="match status" value="1"/>
</dbReference>
<dbReference type="InterPro" id="IPR046357">
    <property type="entry name" value="PPIase_dom_sf"/>
</dbReference>
<dbReference type="InterPro" id="IPR001179">
    <property type="entry name" value="PPIase_FKBP_dom"/>
</dbReference>
<dbReference type="InterPro" id="IPR005215">
    <property type="entry name" value="Trig_fac"/>
</dbReference>
<dbReference type="InterPro" id="IPR008880">
    <property type="entry name" value="Trigger_fac_C"/>
</dbReference>
<dbReference type="InterPro" id="IPR037041">
    <property type="entry name" value="Trigger_fac_C_sf"/>
</dbReference>
<dbReference type="InterPro" id="IPR008881">
    <property type="entry name" value="Trigger_fac_ribosome-bd_bac"/>
</dbReference>
<dbReference type="InterPro" id="IPR036611">
    <property type="entry name" value="Trigger_fac_ribosome-bd_sf"/>
</dbReference>
<dbReference type="InterPro" id="IPR027304">
    <property type="entry name" value="Trigger_fact/SurA_dom_sf"/>
</dbReference>
<dbReference type="NCBIfam" id="TIGR00115">
    <property type="entry name" value="tig"/>
    <property type="match status" value="1"/>
</dbReference>
<dbReference type="PANTHER" id="PTHR30560">
    <property type="entry name" value="TRIGGER FACTOR CHAPERONE AND PEPTIDYL-PROLYL CIS/TRANS ISOMERASE"/>
    <property type="match status" value="1"/>
</dbReference>
<dbReference type="PANTHER" id="PTHR30560:SF3">
    <property type="entry name" value="TRIGGER FACTOR-LIKE PROTEIN TIG, CHLOROPLASTIC"/>
    <property type="match status" value="1"/>
</dbReference>
<dbReference type="Pfam" id="PF00254">
    <property type="entry name" value="FKBP_C"/>
    <property type="match status" value="1"/>
</dbReference>
<dbReference type="Pfam" id="PF05698">
    <property type="entry name" value="Trigger_C"/>
    <property type="match status" value="1"/>
</dbReference>
<dbReference type="Pfam" id="PF05697">
    <property type="entry name" value="Trigger_N"/>
    <property type="match status" value="1"/>
</dbReference>
<dbReference type="PIRSF" id="PIRSF003095">
    <property type="entry name" value="Trigger_factor"/>
    <property type="match status" value="1"/>
</dbReference>
<dbReference type="SUPFAM" id="SSF54534">
    <property type="entry name" value="FKBP-like"/>
    <property type="match status" value="1"/>
</dbReference>
<dbReference type="SUPFAM" id="SSF109998">
    <property type="entry name" value="Triger factor/SurA peptide-binding domain-like"/>
    <property type="match status" value="1"/>
</dbReference>
<dbReference type="SUPFAM" id="SSF102735">
    <property type="entry name" value="Trigger factor ribosome-binding domain"/>
    <property type="match status" value="1"/>
</dbReference>
<dbReference type="PROSITE" id="PS50059">
    <property type="entry name" value="FKBP_PPIASE"/>
    <property type="match status" value="1"/>
</dbReference>
<organism>
    <name type="scientific">Bartonella bacilliformis (strain ATCC 35685 / KC583 / Herrer 020/F12,63)</name>
    <dbReference type="NCBI Taxonomy" id="360095"/>
    <lineage>
        <taxon>Bacteria</taxon>
        <taxon>Pseudomonadati</taxon>
        <taxon>Pseudomonadota</taxon>
        <taxon>Alphaproteobacteria</taxon>
        <taxon>Hyphomicrobiales</taxon>
        <taxon>Bartonellaceae</taxon>
        <taxon>Bartonella</taxon>
    </lineage>
</organism>